<proteinExistence type="evidence at protein level"/>
<accession>O14893</accession>
<accession>B2R9W8</accession>
<accession>Q2M3B3</accession>
<accession>Q9H4F5</accession>
<accession>Q9NS77</accession>
<accession>Q9NS78</accession>
<accession>Q9NS79</accession>
<protein>
    <recommendedName>
        <fullName>Gem-associated protein 2</fullName>
        <shortName>Gemin-2</shortName>
    </recommendedName>
    <alternativeName>
        <fullName>Component of gems 2</fullName>
    </alternativeName>
    <alternativeName>
        <fullName>Survival of motor neuron protein-interacting protein 1</fullName>
        <shortName>SMN-interacting protein 1</shortName>
    </alternativeName>
</protein>
<evidence type="ECO:0000269" key="1">
    <source>
    </source>
</evidence>
<evidence type="ECO:0000269" key="2">
    <source>
    </source>
</evidence>
<evidence type="ECO:0000269" key="3">
    <source>
    </source>
</evidence>
<evidence type="ECO:0000269" key="4">
    <source>
    </source>
</evidence>
<evidence type="ECO:0000269" key="5">
    <source>
    </source>
</evidence>
<evidence type="ECO:0000269" key="6">
    <source>
    </source>
</evidence>
<evidence type="ECO:0000269" key="7">
    <source>
    </source>
</evidence>
<evidence type="ECO:0000269" key="8">
    <source>
    </source>
</evidence>
<evidence type="ECO:0000269" key="9">
    <source>
    </source>
</evidence>
<evidence type="ECO:0000269" key="10">
    <source>
    </source>
</evidence>
<evidence type="ECO:0000269" key="11">
    <source>
    </source>
</evidence>
<evidence type="ECO:0000303" key="12">
    <source>
    </source>
</evidence>
<evidence type="ECO:0000305" key="13"/>
<evidence type="ECO:0000312" key="14">
    <source>
        <dbReference type="HGNC" id="HGNC:10884"/>
    </source>
</evidence>
<evidence type="ECO:0007744" key="15">
    <source>
        <dbReference type="PDB" id="2LEH"/>
    </source>
</evidence>
<evidence type="ECO:0007744" key="16">
    <source>
        <dbReference type="PDB" id="5XJL"/>
    </source>
</evidence>
<evidence type="ECO:0007744" key="17">
    <source>
        <dbReference type="PDB" id="5XJQ"/>
    </source>
</evidence>
<evidence type="ECO:0007744" key="18">
    <source>
        <dbReference type="PDB" id="5XJR"/>
    </source>
</evidence>
<evidence type="ECO:0007744" key="19">
    <source>
        <dbReference type="PDB" id="5XJS"/>
    </source>
</evidence>
<evidence type="ECO:0007744" key="20">
    <source>
    </source>
</evidence>
<evidence type="ECO:0007744" key="21">
    <source>
    </source>
</evidence>
<evidence type="ECO:0007829" key="22">
    <source>
        <dbReference type="PDB" id="2LEH"/>
    </source>
</evidence>
<evidence type="ECO:0007829" key="23">
    <source>
        <dbReference type="PDB" id="5XJL"/>
    </source>
</evidence>
<evidence type="ECO:0007829" key="24">
    <source>
        <dbReference type="PDB" id="5XJT"/>
    </source>
</evidence>
<evidence type="ECO:0007829" key="25">
    <source>
        <dbReference type="PDB" id="5XJU"/>
    </source>
</evidence>
<keyword id="KW-0002">3D-structure</keyword>
<keyword id="KW-0024">Alternative initiation</keyword>
<keyword id="KW-0025">Alternative splicing</keyword>
<keyword id="KW-0963">Cytoplasm</keyword>
<keyword id="KW-0507">mRNA processing</keyword>
<keyword id="KW-0508">mRNA splicing</keyword>
<keyword id="KW-0539">Nucleus</keyword>
<keyword id="KW-0597">Phosphoprotein</keyword>
<keyword id="KW-1267">Proteomics identification</keyword>
<keyword id="KW-1185">Reference proteome</keyword>
<reference key="1">
    <citation type="journal article" date="1997" name="Cell">
        <title>The spinal muscular atrophy disease gene product, SMN, and its associated protein SIP1 are in a complex with spliceosomal snRNP proteins.</title>
        <authorList>
            <person name="Liu Q."/>
            <person name="Fischer U."/>
            <person name="Wang F."/>
            <person name="Dreyfuss G."/>
        </authorList>
    </citation>
    <scope>NUCLEOTIDE SEQUENCE [MRNA] (ISOFORM 1)</scope>
    <scope>FUNCTION</scope>
    <scope>SUBUNIT</scope>
    <scope>SUBCELLULAR LOCATION</scope>
    <source>
        <tissue>Mammary cancer</tissue>
    </source>
</reference>
<reference key="2">
    <citation type="journal article" date="2002" name="Int. J. Biochem. Cell Biol.">
        <title>Increased expression level of the splicing variant of SIP1 in motor neuron diseases.</title>
        <authorList>
            <person name="Aerbajinai W."/>
            <person name="Ishihara T."/>
            <person name="Arahata K."/>
            <person name="Tsukahara T."/>
        </authorList>
    </citation>
    <scope>NUCLEOTIDE SEQUENCE [MRNA] (ISOFORMS 2; 3 AND 4)</scope>
    <source>
        <tissue>Spinal cord</tissue>
    </source>
</reference>
<reference key="3">
    <citation type="journal article" date="2000" name="Eur. J. Hum. Genet.">
        <title>An essential SMN interacting protein (SIP1) is not involved in the phenotypic variability of spinal muscular atrophy (SMA).</title>
        <authorList>
            <person name="Helmken C."/>
            <person name="Wetter A."/>
            <person name="Rudnik-Schoeneborn S."/>
            <person name="Liehr T."/>
            <person name="Zerres K."/>
            <person name="Wirth B."/>
        </authorList>
    </citation>
    <scope>NUCLEOTIDE SEQUENCE [GENOMIC DNA]</scope>
</reference>
<reference key="4">
    <citation type="journal article" date="2004" name="Nat. Genet.">
        <title>Complete sequencing and characterization of 21,243 full-length human cDNAs.</title>
        <authorList>
            <person name="Ota T."/>
            <person name="Suzuki Y."/>
            <person name="Nishikawa T."/>
            <person name="Otsuki T."/>
            <person name="Sugiyama T."/>
            <person name="Irie R."/>
            <person name="Wakamatsu A."/>
            <person name="Hayashi K."/>
            <person name="Sato H."/>
            <person name="Nagai K."/>
            <person name="Kimura K."/>
            <person name="Makita H."/>
            <person name="Sekine M."/>
            <person name="Obayashi M."/>
            <person name="Nishi T."/>
            <person name="Shibahara T."/>
            <person name="Tanaka T."/>
            <person name="Ishii S."/>
            <person name="Yamamoto J."/>
            <person name="Saito K."/>
            <person name="Kawai Y."/>
            <person name="Isono Y."/>
            <person name="Nakamura Y."/>
            <person name="Nagahari K."/>
            <person name="Murakami K."/>
            <person name="Yasuda T."/>
            <person name="Iwayanagi T."/>
            <person name="Wagatsuma M."/>
            <person name="Shiratori A."/>
            <person name="Sudo H."/>
            <person name="Hosoiri T."/>
            <person name="Kaku Y."/>
            <person name="Kodaira H."/>
            <person name="Kondo H."/>
            <person name="Sugawara M."/>
            <person name="Takahashi M."/>
            <person name="Kanda K."/>
            <person name="Yokoi T."/>
            <person name="Furuya T."/>
            <person name="Kikkawa E."/>
            <person name="Omura Y."/>
            <person name="Abe K."/>
            <person name="Kamihara K."/>
            <person name="Katsuta N."/>
            <person name="Sato K."/>
            <person name="Tanikawa M."/>
            <person name="Yamazaki M."/>
            <person name="Ninomiya K."/>
            <person name="Ishibashi T."/>
            <person name="Yamashita H."/>
            <person name="Murakawa K."/>
            <person name="Fujimori K."/>
            <person name="Tanai H."/>
            <person name="Kimata M."/>
            <person name="Watanabe M."/>
            <person name="Hiraoka S."/>
            <person name="Chiba Y."/>
            <person name="Ishida S."/>
            <person name="Ono Y."/>
            <person name="Takiguchi S."/>
            <person name="Watanabe S."/>
            <person name="Yosida M."/>
            <person name="Hotuta T."/>
            <person name="Kusano J."/>
            <person name="Kanehori K."/>
            <person name="Takahashi-Fujii A."/>
            <person name="Hara H."/>
            <person name="Tanase T.-O."/>
            <person name="Nomura Y."/>
            <person name="Togiya S."/>
            <person name="Komai F."/>
            <person name="Hara R."/>
            <person name="Takeuchi K."/>
            <person name="Arita M."/>
            <person name="Imose N."/>
            <person name="Musashino K."/>
            <person name="Yuuki H."/>
            <person name="Oshima A."/>
            <person name="Sasaki N."/>
            <person name="Aotsuka S."/>
            <person name="Yoshikawa Y."/>
            <person name="Matsunawa H."/>
            <person name="Ichihara T."/>
            <person name="Shiohata N."/>
            <person name="Sano S."/>
            <person name="Moriya S."/>
            <person name="Momiyama H."/>
            <person name="Satoh N."/>
            <person name="Takami S."/>
            <person name="Terashima Y."/>
            <person name="Suzuki O."/>
            <person name="Nakagawa S."/>
            <person name="Senoh A."/>
            <person name="Mizoguchi H."/>
            <person name="Goto Y."/>
            <person name="Shimizu F."/>
            <person name="Wakebe H."/>
            <person name="Hishigaki H."/>
            <person name="Watanabe T."/>
            <person name="Sugiyama A."/>
            <person name="Takemoto M."/>
            <person name="Kawakami B."/>
            <person name="Yamazaki M."/>
            <person name="Watanabe K."/>
            <person name="Kumagai A."/>
            <person name="Itakura S."/>
            <person name="Fukuzumi Y."/>
            <person name="Fujimori Y."/>
            <person name="Komiyama M."/>
            <person name="Tashiro H."/>
            <person name="Tanigami A."/>
            <person name="Fujiwara T."/>
            <person name="Ono T."/>
            <person name="Yamada K."/>
            <person name="Fujii Y."/>
            <person name="Ozaki K."/>
            <person name="Hirao M."/>
            <person name="Ohmori Y."/>
            <person name="Kawabata A."/>
            <person name="Hikiji T."/>
            <person name="Kobatake N."/>
            <person name="Inagaki H."/>
            <person name="Ikema Y."/>
            <person name="Okamoto S."/>
            <person name="Okitani R."/>
            <person name="Kawakami T."/>
            <person name="Noguchi S."/>
            <person name="Itoh T."/>
            <person name="Shigeta K."/>
            <person name="Senba T."/>
            <person name="Matsumura K."/>
            <person name="Nakajima Y."/>
            <person name="Mizuno T."/>
            <person name="Morinaga M."/>
            <person name="Sasaki M."/>
            <person name="Togashi T."/>
            <person name="Oyama M."/>
            <person name="Hata H."/>
            <person name="Watanabe M."/>
            <person name="Komatsu T."/>
            <person name="Mizushima-Sugano J."/>
            <person name="Satoh T."/>
            <person name="Shirai Y."/>
            <person name="Takahashi Y."/>
            <person name="Nakagawa K."/>
            <person name="Okumura K."/>
            <person name="Nagase T."/>
            <person name="Nomura N."/>
            <person name="Kikuchi H."/>
            <person name="Masuho Y."/>
            <person name="Yamashita R."/>
            <person name="Nakai K."/>
            <person name="Yada T."/>
            <person name="Nakamura Y."/>
            <person name="Ohara O."/>
            <person name="Isogai T."/>
            <person name="Sugano S."/>
        </authorList>
    </citation>
    <scope>NUCLEOTIDE SEQUENCE [LARGE SCALE MRNA] (ISOFORM 1)</scope>
    <source>
        <tissue>Skeletal muscle</tissue>
    </source>
</reference>
<reference key="5">
    <citation type="journal article" date="2004" name="Genome Res.">
        <title>The status, quality, and expansion of the NIH full-length cDNA project: the Mammalian Gene Collection (MGC).</title>
        <authorList>
            <consortium name="The MGC Project Team"/>
        </authorList>
    </citation>
    <scope>NUCLEOTIDE SEQUENCE [LARGE SCALE MRNA] (ISOFORM 1)</scope>
    <source>
        <tissue>Brain</tissue>
    </source>
</reference>
<reference key="6">
    <citation type="journal article" date="1999" name="Proc. Natl. Acad. Sci. U.S.A.">
        <title>SMN mutants of spinal muscular atrophy patients are defective in binding to snRNP proteins.</title>
        <authorList>
            <person name="Pellizzoni L."/>
            <person name="Charroux B."/>
            <person name="Dreyfuss G."/>
        </authorList>
    </citation>
    <scope>INTERACTION WITH SMN1</scope>
</reference>
<reference key="7">
    <citation type="journal article" date="2002" name="J. Biol. Chem.">
        <title>Gemin5, a novel WD repeat protein component of the SMN complex that binds Sm proteins.</title>
        <authorList>
            <person name="Gubitz A.K."/>
            <person name="Mourelatos Z."/>
            <person name="Abel L."/>
            <person name="Rappsilber J."/>
            <person name="Mann M."/>
            <person name="Dreyfuss G."/>
        </authorList>
    </citation>
    <scope>INTERACTION WITH GEMIN5 AND THE SMN COMPLEX</scope>
    <scope>SUBCELLULAR LOCATION</scope>
</reference>
<reference key="8">
    <citation type="journal article" date="2005" name="Mol. Cell. Biol.">
        <title>Specific sequence features, recognized by the SMN complex, identify snRNAs and determine their fate as snRNPs.</title>
        <authorList>
            <person name="Golembe T.J."/>
            <person name="Yong J."/>
            <person name="Dreyfuss G."/>
        </authorList>
    </citation>
    <scope>FUNCTION</scope>
    <scope>IDENTIFICATION IN THE SMN COMPLEX</scope>
    <scope>IDENTIFICATION IN SMN-SM COMPLEX</scope>
</reference>
<reference key="9">
    <citation type="journal article" date="2007" name="J. Biol. Chem.">
        <title>A comprehensive interaction map of the human survival of motor neuron (SMN) complex.</title>
        <authorList>
            <person name="Otter S."/>
            <person name="Grimmler M."/>
            <person name="Neuenkirchen N."/>
            <person name="Chari A."/>
            <person name="Sickmann A."/>
            <person name="Fischer U."/>
        </authorList>
    </citation>
    <scope>IDENTIFICATION IN THE SMN COMPLEX</scope>
    <scope>INTERACTION WITH GEMIN5 AND SMN1</scope>
</reference>
<reference key="10">
    <citation type="journal article" date="2008" name="Cell">
        <title>An assembly chaperone collaborates with the SMN complex to generate spliceosomal SnRNPs.</title>
        <authorList>
            <person name="Chari A."/>
            <person name="Golas M.M."/>
            <person name="Klingenhager M."/>
            <person name="Neuenkirchen N."/>
            <person name="Sander B."/>
            <person name="Englbrecht C."/>
            <person name="Sickmann A."/>
            <person name="Stark H."/>
            <person name="Fischer U."/>
        </authorList>
    </citation>
    <scope>FUNCTION IN SNRNP BIOGENESIS</scope>
    <scope>IDENTIFICATION IN SMN-SM COMPLEX</scope>
</reference>
<reference key="11">
    <citation type="journal article" date="2008" name="Mol. Cell">
        <title>Kinase-selective enrichment enables quantitative phosphoproteomics of the kinome across the cell cycle.</title>
        <authorList>
            <person name="Daub H."/>
            <person name="Olsen J.V."/>
            <person name="Bairlein M."/>
            <person name="Gnad F."/>
            <person name="Oppermann F.S."/>
            <person name="Korner R."/>
            <person name="Greff Z."/>
            <person name="Keri G."/>
            <person name="Stemmann O."/>
            <person name="Mann M."/>
        </authorList>
    </citation>
    <scope>PHOSPHORYLATION [LARGE SCALE ANALYSIS] AT SER-166</scope>
    <scope>IDENTIFICATION BY MASS SPECTROMETRY [LARGE SCALE ANALYSIS]</scope>
    <source>
        <tissue>Cervix carcinoma</tissue>
    </source>
</reference>
<reference key="12">
    <citation type="journal article" date="2008" name="Proc. Natl. Acad. Sci. U.S.A.">
        <title>A quantitative atlas of mitotic phosphorylation.</title>
        <authorList>
            <person name="Dephoure N."/>
            <person name="Zhou C."/>
            <person name="Villen J."/>
            <person name="Beausoleil S.A."/>
            <person name="Bakalarski C.E."/>
            <person name="Elledge S.J."/>
            <person name="Gygi S.P."/>
        </authorList>
    </citation>
    <scope>IDENTIFICATION BY MASS SPECTROMETRY [LARGE SCALE ANALYSIS]</scope>
    <source>
        <tissue>Cervix carcinoma</tissue>
    </source>
</reference>
<reference key="13">
    <citation type="journal article" date="2009" name="Anal. Chem.">
        <title>Lys-N and trypsin cover complementary parts of the phosphoproteome in a refined SCX-based approach.</title>
        <authorList>
            <person name="Gauci S."/>
            <person name="Helbig A.O."/>
            <person name="Slijper M."/>
            <person name="Krijgsveld J."/>
            <person name="Heck A.J."/>
            <person name="Mohammed S."/>
        </authorList>
    </citation>
    <scope>IDENTIFICATION BY MASS SPECTROMETRY [LARGE SCALE ANALYSIS]</scope>
</reference>
<reference key="14">
    <citation type="journal article" date="2011" name="BMC Syst. Biol.">
        <title>Initial characterization of the human central proteome.</title>
        <authorList>
            <person name="Burkard T.R."/>
            <person name="Planyavsky M."/>
            <person name="Kaupe I."/>
            <person name="Breitwieser F.P."/>
            <person name="Buerckstuemmer T."/>
            <person name="Bennett K.L."/>
            <person name="Superti-Furga G."/>
            <person name="Colinge J."/>
        </authorList>
    </citation>
    <scope>IDENTIFICATION BY MASS SPECTROMETRY [LARGE SCALE ANALYSIS]</scope>
</reference>
<reference key="15">
    <citation type="journal article" date="2012" name="Structure">
        <title>The survival motor neuron protein forms soluble glycine zipper oligomers.</title>
        <authorList>
            <person name="Martin R."/>
            <person name="Gupta K."/>
            <person name="Ninan N.S."/>
            <person name="Perry K."/>
            <person name="Van Duyne G.D."/>
        </authorList>
    </citation>
    <scope>INTERACTION WITH SMN1</scope>
</reference>
<reference key="16">
    <citation type="journal article" date="2014" name="J. Proteomics">
        <title>An enzyme assisted RP-RPLC approach for in-depth analysis of human liver phosphoproteome.</title>
        <authorList>
            <person name="Bian Y."/>
            <person name="Song C."/>
            <person name="Cheng K."/>
            <person name="Dong M."/>
            <person name="Wang F."/>
            <person name="Huang J."/>
            <person name="Sun D."/>
            <person name="Wang L."/>
            <person name="Ye M."/>
            <person name="Zou H."/>
        </authorList>
    </citation>
    <scope>PHOSPHORYLATION [LARGE SCALE ANALYSIS] AT SER-81</scope>
    <scope>IDENTIFICATION BY MASS SPECTROMETRY [LARGE SCALE ANALYSIS]</scope>
    <source>
        <tissue>Liver</tissue>
    </source>
</reference>
<reference key="17">
    <citation type="journal article" date="2015" name="J. Biol. Chem.">
        <title>Oligomeric Properties of Survival Motor Neuron.Gemin2 Complexes.</title>
        <authorList>
            <person name="Gupta K."/>
            <person name="Martin R."/>
            <person name="Sharp R."/>
            <person name="Sarachan K.L."/>
            <person name="Ninan N.S."/>
            <person name="Van Duyne G.D."/>
        </authorList>
    </citation>
    <scope>SUBUNIT</scope>
    <scope>INTERACTION WITH SMN1</scope>
</reference>
<reference evidence="16" key="18">
    <citation type="journal article" date="2011" name="Cell">
        <title>Structure of a key intermediate of the SMN complex reveals Gemin2's crucial function in snRNP assembly.</title>
        <authorList>
            <person name="Zhang R."/>
            <person name="So B.R."/>
            <person name="Li P."/>
            <person name="Yong J."/>
            <person name="Glisovic T."/>
            <person name="Wan L."/>
            <person name="Dreyfuss G."/>
        </authorList>
    </citation>
    <scope>X-RAY CRYSTALLOGRAPHY (2.50 ANGSTROMS) IN COMPLEX WITH SNRPD1; SNRPD2; SNRPE; SNRPF; SNRPG AND SMN1</scope>
    <scope>FUNCTION</scope>
    <scope>INTERACTION WITH SNRPD1; SNRPD2; SNRPE; SNRPF; SNRPG AND SMN1</scope>
    <scope>MUTAGENESIS OF TYR-52 AND ARG-213</scope>
</reference>
<reference evidence="15" key="19">
    <citation type="journal article" date="2012" name="Biochem. J.">
        <title>Solution structure of the core SMN-Gemin2 complex.</title>
        <authorList>
            <person name="Sarachan K.L."/>
            <person name="Valentine K.G."/>
            <person name="Gupta K."/>
            <person name="Moorman V.R."/>
            <person name="Gledhill J.M."/>
            <person name="Bernens M."/>
            <person name="Tommos C."/>
            <person name="Wand A.J."/>
            <person name="Van Duyne G.D."/>
        </authorList>
    </citation>
    <scope>STRUCTURE BY NMR OF 95-280</scope>
    <scope>INTERACTION WITH SMN1</scope>
</reference>
<reference evidence="17 18 19" key="20">
    <citation type="journal article" date="2020" name="Nucleic Acids Res.">
        <title>Negative cooperativity between Gemin2 and RNA provides insights into RNA selection and the SMN complex's release in snRNP assembly.</title>
        <authorList>
            <person name="Yi H."/>
            <person name="Mu L."/>
            <person name="Shen C."/>
            <person name="Kong X."/>
            <person name="Wang Y."/>
            <person name="Hou Y."/>
            <person name="Zhang R."/>
        </authorList>
    </citation>
    <scope>X-RAY CRYSTALLOGRAPHY (3.12 ANGSTROMS) OF 40-280 IN COMPLEX WITH SNRPD1; SNRPD2; SNRPE; SNRPF; SNRPG AND SMN1</scope>
    <scope>FUNCTION</scope>
    <scope>INTERACTION WITH SNRPD1; SNRPD2; SNRPE; SNRPF AND SMN1</scope>
</reference>
<gene>
    <name evidence="14" type="primary">GEMIN2</name>
    <name type="synonym">SIP1</name>
</gene>
<feature type="chain" id="PRO_0000087455" description="Gem-associated protein 2">
    <location>
        <begin position="1"/>
        <end position="280"/>
    </location>
</feature>
<feature type="region of interest" description="May play a minor inhibitory role in snRNA binding to 5Sm (SNRPD1, SNRPD2, SNRPE, SNRPF and SNRPG) during snRNP assembly by inserting into the RNA binding pocket of 5Sm" evidence="6">
    <location>
        <begin position="1"/>
        <end position="39"/>
    </location>
</feature>
<feature type="modified residue" description="Phosphoserine" evidence="21">
    <location>
        <position position="81"/>
    </location>
</feature>
<feature type="modified residue" description="Phosphoserine" evidence="20">
    <location>
        <position position="166"/>
    </location>
</feature>
<feature type="splice variant" id="VSP_061433" description="In isoform 5.">
    <location>
        <begin position="1"/>
        <end position="11"/>
    </location>
</feature>
<feature type="splice variant" id="VSP_013543" description="In isoform 4." evidence="12">
    <original>VEPCDLTEGFDPSV</original>
    <variation>DRSSSMSRCCGSSN</variation>
    <location>
        <begin position="31"/>
        <end position="44"/>
    </location>
</feature>
<feature type="splice variant" id="VSP_013544" description="In isoform 4." evidence="12">
    <location>
        <begin position="45"/>
        <end position="280"/>
    </location>
</feature>
<feature type="splice variant" id="VSP_013545" description="In isoform 2." evidence="12">
    <location>
        <begin position="173"/>
        <end position="187"/>
    </location>
</feature>
<feature type="splice variant" id="VSP_013546" description="In isoform 3." evidence="12">
    <original>DS</original>
    <variation>VF</variation>
    <location>
        <begin position="249"/>
        <end position="250"/>
    </location>
</feature>
<feature type="splice variant" id="VSP_013547" description="In isoform 3." evidence="12">
    <location>
        <begin position="251"/>
        <end position="280"/>
    </location>
</feature>
<feature type="mutagenesis site" description="Impairs binding to Sm complex proteins." evidence="6">
    <original>Y</original>
    <variation>D</variation>
    <location>
        <position position="52"/>
    </location>
</feature>
<feature type="mutagenesis site" description="Impairs binding to SMN1." evidence="6">
    <original>R</original>
    <variation>D</variation>
    <location>
        <position position="213"/>
    </location>
</feature>
<feature type="helix" evidence="23">
    <location>
        <begin position="49"/>
        <end position="61"/>
    </location>
</feature>
<feature type="strand" evidence="23">
    <location>
        <begin position="65"/>
        <end position="68"/>
    </location>
</feature>
<feature type="turn" evidence="24">
    <location>
        <begin position="94"/>
        <end position="96"/>
    </location>
</feature>
<feature type="helix" evidence="23">
    <location>
        <begin position="100"/>
        <end position="120"/>
    </location>
</feature>
<feature type="helix" evidence="25">
    <location>
        <begin position="121"/>
        <end position="125"/>
    </location>
</feature>
<feature type="helix" evidence="23">
    <location>
        <begin position="141"/>
        <end position="149"/>
    </location>
</feature>
<feature type="helix" evidence="22">
    <location>
        <begin position="152"/>
        <end position="155"/>
    </location>
</feature>
<feature type="strand" evidence="22">
    <location>
        <begin position="158"/>
        <end position="160"/>
    </location>
</feature>
<feature type="turn" evidence="22">
    <location>
        <begin position="161"/>
        <end position="164"/>
    </location>
</feature>
<feature type="turn" evidence="22">
    <location>
        <begin position="172"/>
        <end position="174"/>
    </location>
</feature>
<feature type="helix" evidence="23">
    <location>
        <begin position="180"/>
        <end position="183"/>
    </location>
</feature>
<feature type="helix" evidence="23">
    <location>
        <begin position="188"/>
        <end position="204"/>
    </location>
</feature>
<feature type="helix" evidence="23">
    <location>
        <begin position="209"/>
        <end position="221"/>
    </location>
</feature>
<feature type="helix" evidence="23">
    <location>
        <begin position="228"/>
        <end position="244"/>
    </location>
</feature>
<feature type="turn" evidence="25">
    <location>
        <begin position="245"/>
        <end position="247"/>
    </location>
</feature>
<feature type="helix" evidence="23">
    <location>
        <begin position="255"/>
        <end position="268"/>
    </location>
</feature>
<feature type="helix" evidence="23">
    <location>
        <begin position="273"/>
        <end position="275"/>
    </location>
</feature>
<organism>
    <name type="scientific">Homo sapiens</name>
    <name type="common">Human</name>
    <dbReference type="NCBI Taxonomy" id="9606"/>
    <lineage>
        <taxon>Eukaryota</taxon>
        <taxon>Metazoa</taxon>
        <taxon>Chordata</taxon>
        <taxon>Craniata</taxon>
        <taxon>Vertebrata</taxon>
        <taxon>Euteleostomi</taxon>
        <taxon>Mammalia</taxon>
        <taxon>Eutheria</taxon>
        <taxon>Euarchontoglires</taxon>
        <taxon>Primates</taxon>
        <taxon>Haplorrhini</taxon>
        <taxon>Catarrhini</taxon>
        <taxon>Hominidae</taxon>
        <taxon>Homo</taxon>
    </lineage>
</organism>
<sequence length="280" mass="31585">MRRAELAGLKTMAWVPAESAVEELMPRLLPVEPCDLTEGFDPSVPPRTPQEYLRRVQIEAAQCPDVVVAQIDPKKLKRKQSVNISLSGCQPAPEGYSPTLQWQQQQVAQFSTVRQNVNKHRSHWKSQQLDSNVTMPKSEDEEGWKKFCLGEKLCADGAVGPATNESPGIDYVQIGFPPLLSIVSRMNQATVTSVLEYLSNWFGERDFTPELGRWLYALLACLEKPLLPEAHSLIRQLARRCSEVRLLVDSKDDERVPALNLLICLVSRYFDQRDLADEPS</sequence>
<comment type="function">
    <text evidence="3 5 6 10 11">The SMN complex catalyzes the assembly of small nuclear ribonucleoproteins (snRNPs), the building blocks of the spliceosome, and thereby plays an important role in the splicing of cellular pre-mRNAs (PubMed:18984161, PubMed:9323129). Most spliceosomal snRNPs contain a common set of Sm proteins SNRPB, SNRPD1, SNRPD2, SNRPD3, SNRPE, SNRPF and SNRPG that assemble in a heptameric protein ring on the Sm site of the small nuclear RNA to form the core snRNP (Sm core) (PubMed:18984161). In the cytosol, the Sm proteins SNRPD1, SNRPD2, SNRPE, SNRPF and SNRPG (5Sm) are trapped in an inactive 6S pICln-Sm complex by the chaperone CLNS1A that controls the assembly of the core snRNP (PubMed:18984161). To assemble core snRNPs, the SMN complex accepts the trapped 5Sm proteins from CLNS1A (PubMed:18984161, PubMed:9323129). Binding of snRNA inside 5Sm ultimately triggers eviction of the SMN complex, thereby allowing binding of SNRPD3 and SNRPB to complete assembly of the core snRNP (PubMed:31799625). Within the SMN complex, GEMIN2 constrains the conformation of 5Sm, thereby promoting 5Sm binding to snRNA containing the snRNP code (a nonameric Sm site and a 3'-adjacent stem-loop), thus preventing progression of assembly until a cognate substrate is bound (PubMed:16314521, PubMed:21816274, PubMed:31799625).</text>
</comment>
<comment type="subunit">
    <text evidence="1 2 3 4 5 6 7 8 9 10 11">Monomer (PubMed:26092730). Part of the core SMN complex that contains SMN1, GEMIN2/SIP1, DDX20/GEMIN3, GEMIN4, GEMIN5, GEMIN6, GEMIN7, GEMIN8 and STRAP/UNRIP (PubMed:11714716, PubMed:16314521, PubMed:17178713, PubMed:9323129). Part of the SMN-Sm complex that contains SMN1, GEMIN2/SIP1, DDX20/GEMIN3, GEMIN4, GEMIN5, GEMIN6, GEMIN7, GEMIN8, STRAP/UNRIP and the Sm proteins SNRPB, SNRPD1, SNRPD2, SNRPD3, SNRPE, SNRPF and SNRPG (PubMed:16314521, PubMed:18984161, PubMed:9323129). Interacts with GEMIN5; the interaction is direct (PubMed:11714716, PubMed:17178713). Interacts (via C-terminus) with SMN1; the interaction is direct (PubMed:10500148, PubMed:17178713, PubMed:21816274, PubMed:22607171, PubMed:23022347, PubMed:26092730, PubMed:31799625). Interacts with SNRPD1; the interaction is direct (PubMed:21816274, PubMed:31799625). Interacts with SNRPD2; the interaction is direct (PubMed:21816274, PubMed:31799625). Interacts (via N-terminus) with SNRPF; the interaction is direct (PubMed:21816274, PubMed:31799625). Interacts (via N-terminus) with SNRPE; the interaction is direct (PubMed:21816274, PubMed:31799625). Interacts (via N-terminus) with SNRPG; the interaction is direct (PubMed:21816274).</text>
</comment>
<comment type="interaction">
    <interactant intactId="EBI-443648">
        <id>O14893</id>
    </interactant>
    <interactant intactId="EBI-10181188">
        <id>Q8N7W2-2</id>
        <label>BEND7</label>
    </interactant>
    <organismsDiffer>false</organismsDiffer>
    <experiments>3</experiments>
</comment>
<comment type="interaction">
    <interactant intactId="EBI-443648">
        <id>O14893</id>
    </interactant>
    <interactant intactId="EBI-12690664">
        <id>P28358</id>
        <label>HOXD10</label>
    </interactant>
    <organismsDiffer>false</organismsDiffer>
    <experiments>3</experiments>
</comment>
<comment type="interaction">
    <interactant intactId="EBI-443648">
        <id>O14893</id>
    </interactant>
    <interactant intactId="EBI-6509505">
        <id>Q0VD86</id>
        <label>INCA1</label>
    </interactant>
    <organismsDiffer>false</organismsDiffer>
    <experiments>3</experiments>
</comment>
<comment type="interaction">
    <interactant intactId="EBI-443648">
        <id>O14893</id>
    </interactant>
    <interactant intactId="EBI-359923">
        <id>O60684</id>
        <label>KPNA6</label>
    </interactant>
    <organismsDiffer>false</organismsDiffer>
    <experiments>5</experiments>
</comment>
<comment type="interaction">
    <interactant intactId="EBI-443648">
        <id>O14893</id>
    </interactant>
    <interactant intactId="EBI-2864512">
        <id>P50221</id>
        <label>MEOX1</label>
    </interactant>
    <organismsDiffer>false</organismsDiffer>
    <experiments>3</experiments>
</comment>
<comment type="interaction">
    <interactant intactId="EBI-443648">
        <id>O14893</id>
    </interactant>
    <interactant intactId="EBI-747278">
        <id>P26367</id>
        <label>PAX6</label>
    </interactant>
    <organismsDiffer>false</organismsDiffer>
    <experiments>3</experiments>
</comment>
<comment type="interaction">
    <interactant intactId="EBI-443648">
        <id>O14893</id>
    </interactant>
    <interactant intactId="EBI-372273">
        <id>P20618</id>
        <label>PSMB1</label>
    </interactant>
    <organismsDiffer>false</organismsDiffer>
    <experiments>3</experiments>
</comment>
<comment type="interaction">
    <interactant intactId="EBI-443648">
        <id>O14893</id>
    </interactant>
    <interactant intactId="EBI-366542">
        <id>O95059</id>
        <label>RPP14</label>
    </interactant>
    <organismsDiffer>false</organismsDiffer>
    <experiments>3</experiments>
</comment>
<comment type="interaction">
    <interactant intactId="EBI-443648">
        <id>O14893</id>
    </interactant>
    <interactant intactId="EBI-395421">
        <id>Q16637</id>
        <label>SMN2</label>
    </interactant>
    <organismsDiffer>false</organismsDiffer>
    <experiments>21</experiments>
</comment>
<comment type="interaction">
    <interactant intactId="EBI-443648">
        <id>O14893</id>
    </interactant>
    <interactant intactId="EBI-16014970">
        <id>Q16637-2</id>
        <label>SMN2</label>
    </interactant>
    <organismsDiffer>false</organismsDiffer>
    <experiments>4</experiments>
</comment>
<comment type="interaction">
    <interactant intactId="EBI-443648">
        <id>O14893</id>
    </interactant>
    <interactant intactId="EBI-356900">
        <id>P62306</id>
        <label>SNRPF</label>
    </interactant>
    <organismsDiffer>false</organismsDiffer>
    <experiments>14</experiments>
</comment>
<comment type="interaction">
    <interactant intactId="EBI-443648">
        <id>O14893</id>
    </interactant>
    <interactant intactId="EBI-742688">
        <id>Q9NZD8</id>
        <label>SPG21</label>
    </interactant>
    <organismsDiffer>false</organismsDiffer>
    <experiments>3</experiments>
</comment>
<comment type="subcellular location">
    <subcellularLocation>
        <location>Nucleus</location>
        <location>Gem</location>
    </subcellularLocation>
    <subcellularLocation>
        <location>Cytoplasm</location>
    </subcellularLocation>
    <text>Localized in subnuclear structures next to coiled bodies, called gems, which are highly enriched in spliceosomal snRNPs. Also found in the cytoplasm.</text>
</comment>
<comment type="alternative products">
    <event type="alternative splicing"/>
    <event type="alternative initiation"/>
    <isoform>
        <id>O14893-1</id>
        <name>1</name>
        <name>SIP1-alpha</name>
        <sequence type="displayed"/>
    </isoform>
    <isoform>
        <id>O14893-2</id>
        <name>2</name>
        <name>SIP1-beta</name>
        <sequence type="described" ref="VSP_013545"/>
    </isoform>
    <isoform>
        <id>O14893-3</id>
        <name>3</name>
        <name>SIP1-gamma</name>
        <sequence type="described" ref="VSP_013546 VSP_013547"/>
    </isoform>
    <isoform>
        <id>O14893-4</id>
        <name>4</name>
        <name>SIP1-delta</name>
        <sequence type="described" ref="VSP_013543 VSP_013544"/>
    </isoform>
    <isoform>
        <id>O14893-5</id>
        <name>5</name>
        <sequence type="described" ref="VSP_061433"/>
    </isoform>
</comment>
<comment type="similarity">
    <text evidence="13">Belongs to the gemin-2 family.</text>
</comment>
<comment type="caution">
    <text evidence="13">It is uncertain whether Met-1 or Met-12 is the initiator.</text>
</comment>
<comment type="sequence caution" evidence="13">
    <conflict type="erroneous initiation">
        <sequence resource="EMBL-CDS" id="CAC16117"/>
    </conflict>
    <text>Truncated N-terminus.</text>
</comment>
<dbReference type="EMBL" id="AF027150">
    <property type="protein sequence ID" value="AAB82297.1"/>
    <property type="molecule type" value="mRNA"/>
</dbReference>
<dbReference type="EMBL" id="AB037701">
    <property type="protein sequence ID" value="BAB03508.1"/>
    <property type="molecule type" value="mRNA"/>
</dbReference>
<dbReference type="EMBL" id="AB037702">
    <property type="protein sequence ID" value="BAB03509.1"/>
    <property type="molecule type" value="mRNA"/>
</dbReference>
<dbReference type="EMBL" id="AB037703">
    <property type="protein sequence ID" value="BAB03510.1"/>
    <property type="molecule type" value="mRNA"/>
</dbReference>
<dbReference type="EMBL" id="AJ250932">
    <property type="protein sequence ID" value="CAC16117.2"/>
    <property type="status" value="ALT_INIT"/>
    <property type="molecule type" value="Genomic_DNA"/>
</dbReference>
<dbReference type="EMBL" id="AJ250933">
    <property type="protein sequence ID" value="CAC16117.2"/>
    <property type="status" value="JOINED"/>
    <property type="molecule type" value="Genomic_DNA"/>
</dbReference>
<dbReference type="EMBL" id="AJ250934">
    <property type="protein sequence ID" value="CAC16117.2"/>
    <property type="status" value="JOINED"/>
    <property type="molecule type" value="Genomic_DNA"/>
</dbReference>
<dbReference type="EMBL" id="AJ250935">
    <property type="protein sequence ID" value="CAC16117.2"/>
    <property type="status" value="JOINED"/>
    <property type="molecule type" value="Genomic_DNA"/>
</dbReference>
<dbReference type="EMBL" id="AJ250936">
    <property type="protein sequence ID" value="CAC16117.2"/>
    <property type="status" value="JOINED"/>
    <property type="molecule type" value="Genomic_DNA"/>
</dbReference>
<dbReference type="EMBL" id="AJ250937">
    <property type="protein sequence ID" value="CAC16117.2"/>
    <property type="status" value="JOINED"/>
    <property type="molecule type" value="Genomic_DNA"/>
</dbReference>
<dbReference type="EMBL" id="AJ250938">
    <property type="protein sequence ID" value="CAC16117.2"/>
    <property type="status" value="JOINED"/>
    <property type="molecule type" value="Genomic_DNA"/>
</dbReference>
<dbReference type="EMBL" id="AJ250939">
    <property type="protein sequence ID" value="CAC16117.2"/>
    <property type="status" value="JOINED"/>
    <property type="molecule type" value="Genomic_DNA"/>
</dbReference>
<dbReference type="EMBL" id="AK313947">
    <property type="protein sequence ID" value="BAG36665.1"/>
    <property type="molecule type" value="mRNA"/>
</dbReference>
<dbReference type="EMBL" id="BC104968">
    <property type="protein sequence ID" value="AAI04969.1"/>
    <property type="molecule type" value="mRNA"/>
</dbReference>
<dbReference type="CCDS" id="CCDS9669.2">
    <molecule id="O14893-5"/>
</dbReference>
<dbReference type="RefSeq" id="NP_001009182.1">
    <property type="nucleotide sequence ID" value="NM_001009182.1"/>
</dbReference>
<dbReference type="RefSeq" id="NP_001009183.1">
    <property type="nucleotide sequence ID" value="NM_001009183.1"/>
</dbReference>
<dbReference type="RefSeq" id="NP_003607.2">
    <molecule id="O14893-5"/>
    <property type="nucleotide sequence ID" value="NM_003616.3"/>
</dbReference>
<dbReference type="PDB" id="2LEH">
    <property type="method" value="NMR"/>
    <property type="chains" value="A=95-280"/>
</dbReference>
<dbReference type="PDB" id="5XJL">
    <property type="method" value="X-ray"/>
    <property type="resolution" value="2.50 A"/>
    <property type="chains" value="2=1-280"/>
</dbReference>
<dbReference type="PDB" id="5XJQ">
    <property type="method" value="X-ray"/>
    <property type="resolution" value="3.28 A"/>
    <property type="chains" value="2=1-280"/>
</dbReference>
<dbReference type="PDB" id="5XJR">
    <property type="method" value="X-ray"/>
    <property type="resolution" value="3.12 A"/>
    <property type="chains" value="2=40-280"/>
</dbReference>
<dbReference type="PDB" id="5XJS">
    <property type="method" value="X-ray"/>
    <property type="resolution" value="3.38 A"/>
    <property type="chains" value="2=40-280"/>
</dbReference>
<dbReference type="PDB" id="5XJT">
    <property type="method" value="X-ray"/>
    <property type="resolution" value="2.92 A"/>
    <property type="chains" value="2=1-280"/>
</dbReference>
<dbReference type="PDB" id="5XJU">
    <property type="method" value="X-ray"/>
    <property type="resolution" value="2.58 A"/>
    <property type="chains" value="2=40-280"/>
</dbReference>
<dbReference type="PDBsum" id="2LEH"/>
<dbReference type="PDBsum" id="5XJL"/>
<dbReference type="PDBsum" id="5XJQ"/>
<dbReference type="PDBsum" id="5XJR"/>
<dbReference type="PDBsum" id="5XJS"/>
<dbReference type="PDBsum" id="5XJT"/>
<dbReference type="PDBsum" id="5XJU"/>
<dbReference type="BMRB" id="O14893"/>
<dbReference type="SMR" id="O14893"/>
<dbReference type="BioGRID" id="114059">
    <property type="interactions" value="134"/>
</dbReference>
<dbReference type="ComplexPortal" id="CPX-6031">
    <property type="entry name" value="Survival motor neuron complex"/>
</dbReference>
<dbReference type="CORUM" id="O14893"/>
<dbReference type="DIP" id="DIP-32605N"/>
<dbReference type="FunCoup" id="O14893">
    <property type="interactions" value="3177"/>
</dbReference>
<dbReference type="IntAct" id="O14893">
    <property type="interactions" value="81"/>
</dbReference>
<dbReference type="MINT" id="O14893"/>
<dbReference type="STRING" id="9606.ENSP00000308533"/>
<dbReference type="GlyGen" id="O14893">
    <property type="glycosylation" value="1 site, 1 O-linked glycan (1 site)"/>
</dbReference>
<dbReference type="iPTMnet" id="O14893"/>
<dbReference type="PhosphoSitePlus" id="O14893"/>
<dbReference type="BioMuta" id="GEMIN2"/>
<dbReference type="jPOST" id="O14893"/>
<dbReference type="MassIVE" id="O14893"/>
<dbReference type="PaxDb" id="9606-ENSP00000308533"/>
<dbReference type="PeptideAtlas" id="O14893"/>
<dbReference type="ProteomicsDB" id="48281">
    <molecule id="O14893-1"/>
</dbReference>
<dbReference type="ProteomicsDB" id="48282">
    <molecule id="O14893-2"/>
</dbReference>
<dbReference type="ProteomicsDB" id="48283">
    <molecule id="O14893-3"/>
</dbReference>
<dbReference type="ProteomicsDB" id="48284">
    <molecule id="O14893-4"/>
</dbReference>
<dbReference type="Pumba" id="O14893"/>
<dbReference type="Antibodypedia" id="4218">
    <property type="antibodies" value="350 antibodies from 40 providers"/>
</dbReference>
<dbReference type="DNASU" id="8487"/>
<dbReference type="Ensembl" id="ENST00000308317.12">
    <molecule id="O14893-5"/>
    <property type="protein sequence ID" value="ENSP00000308533.7"/>
    <property type="gene ID" value="ENSG00000092208.19"/>
</dbReference>
<dbReference type="GeneID" id="8487"/>
<dbReference type="KEGG" id="hsa:8487"/>
<dbReference type="MANE-Select" id="ENST00000308317.12">
    <molecule id="O14893-5"/>
    <property type="protein sequence ID" value="ENSP00000308533.7"/>
    <property type="RefSeq nucleotide sequence ID" value="NM_003616.3"/>
    <property type="RefSeq protein sequence ID" value="NP_003607.2"/>
</dbReference>
<dbReference type="UCSC" id="uc001wuq.4">
    <molecule id="O14893-1"/>
    <property type="organism name" value="human"/>
</dbReference>
<dbReference type="AGR" id="HGNC:10884"/>
<dbReference type="CTD" id="8487"/>
<dbReference type="DisGeNET" id="8487"/>
<dbReference type="GeneCards" id="GEMIN2"/>
<dbReference type="GeneReviews" id="GEMIN2"/>
<dbReference type="HGNC" id="HGNC:10884">
    <property type="gene designation" value="GEMIN2"/>
</dbReference>
<dbReference type="HPA" id="ENSG00000092208">
    <property type="expression patterns" value="Low tissue specificity"/>
</dbReference>
<dbReference type="MIM" id="602595">
    <property type="type" value="gene"/>
</dbReference>
<dbReference type="neXtProt" id="NX_O14893"/>
<dbReference type="OpenTargets" id="ENSG00000092208"/>
<dbReference type="PharmGKB" id="PA35784"/>
<dbReference type="VEuPathDB" id="HostDB:ENSG00000092208"/>
<dbReference type="eggNOG" id="ENOG502QPK4">
    <property type="taxonomic scope" value="Eukaryota"/>
</dbReference>
<dbReference type="GeneTree" id="ENSGT00390000013814"/>
<dbReference type="HOGENOM" id="CLU_053222_0_0_1"/>
<dbReference type="InParanoid" id="O14893"/>
<dbReference type="OMA" id="PHKCLLP"/>
<dbReference type="OrthoDB" id="428895at2759"/>
<dbReference type="PAN-GO" id="O14893">
    <property type="GO annotations" value="3 GO annotations based on evolutionary models"/>
</dbReference>
<dbReference type="PhylomeDB" id="O14893"/>
<dbReference type="TreeFam" id="TF105864"/>
<dbReference type="PathwayCommons" id="O14893"/>
<dbReference type="Reactome" id="R-HSA-191859">
    <property type="pathway name" value="snRNP Assembly"/>
</dbReference>
<dbReference type="Reactome" id="R-HSA-9754678">
    <property type="pathway name" value="SARS-CoV-2 modulates host translation machinery"/>
</dbReference>
<dbReference type="SignaLink" id="O14893"/>
<dbReference type="SIGNOR" id="O14893"/>
<dbReference type="BioGRID-ORCS" id="8487">
    <property type="hits" value="271 hits in 1156 CRISPR screens"/>
</dbReference>
<dbReference type="CD-CODE" id="6F24707C">
    <property type="entry name" value="Cajal body"/>
</dbReference>
<dbReference type="ChiTaRS" id="GEMIN2">
    <property type="organism name" value="human"/>
</dbReference>
<dbReference type="EvolutionaryTrace" id="O14893"/>
<dbReference type="GenomeRNAi" id="8487"/>
<dbReference type="Pharos" id="O14893">
    <property type="development level" value="Tbio"/>
</dbReference>
<dbReference type="PRO" id="PR:O14893"/>
<dbReference type="Proteomes" id="UP000005640">
    <property type="component" value="Chromosome 14"/>
</dbReference>
<dbReference type="RNAct" id="O14893">
    <property type="molecule type" value="protein"/>
</dbReference>
<dbReference type="Bgee" id="ENSG00000092208">
    <property type="expression patterns" value="Expressed in buccal mucosa cell and 193 other cell types or tissues"/>
</dbReference>
<dbReference type="ExpressionAtlas" id="O14893">
    <property type="expression patterns" value="baseline and differential"/>
</dbReference>
<dbReference type="GO" id="GO:0005829">
    <property type="term" value="C:cytosol"/>
    <property type="evidence" value="ECO:0000314"/>
    <property type="project" value="UniProtKB"/>
</dbReference>
<dbReference type="GO" id="GO:0097504">
    <property type="term" value="C:Gemini of Cajal bodies"/>
    <property type="evidence" value="ECO:0000314"/>
    <property type="project" value="UniProtKB"/>
</dbReference>
<dbReference type="GO" id="GO:0016604">
    <property type="term" value="C:nuclear body"/>
    <property type="evidence" value="ECO:0000314"/>
    <property type="project" value="HPA"/>
</dbReference>
<dbReference type="GO" id="GO:0005730">
    <property type="term" value="C:nucleolus"/>
    <property type="evidence" value="ECO:0000314"/>
    <property type="project" value="HPA"/>
</dbReference>
<dbReference type="GO" id="GO:0005654">
    <property type="term" value="C:nucleoplasm"/>
    <property type="evidence" value="ECO:0000314"/>
    <property type="project" value="HPA"/>
</dbReference>
<dbReference type="GO" id="GO:0005634">
    <property type="term" value="C:nucleus"/>
    <property type="evidence" value="ECO:0000318"/>
    <property type="project" value="GO_Central"/>
</dbReference>
<dbReference type="GO" id="GO:0032797">
    <property type="term" value="C:SMN complex"/>
    <property type="evidence" value="ECO:0000314"/>
    <property type="project" value="UniProtKB"/>
</dbReference>
<dbReference type="GO" id="GO:0034719">
    <property type="term" value="C:SMN-Sm protein complex"/>
    <property type="evidence" value="ECO:0000314"/>
    <property type="project" value="UniProtKB"/>
</dbReference>
<dbReference type="GO" id="GO:0005681">
    <property type="term" value="C:spliceosomal complex"/>
    <property type="evidence" value="ECO:0007669"/>
    <property type="project" value="InterPro"/>
</dbReference>
<dbReference type="GO" id="GO:0006397">
    <property type="term" value="P:mRNA processing"/>
    <property type="evidence" value="ECO:0000304"/>
    <property type="project" value="ProtInc"/>
</dbReference>
<dbReference type="GO" id="GO:1905215">
    <property type="term" value="P:negative regulation of RNA binding"/>
    <property type="evidence" value="ECO:0000314"/>
    <property type="project" value="UniProtKB"/>
</dbReference>
<dbReference type="GO" id="GO:0008380">
    <property type="term" value="P:RNA splicing"/>
    <property type="evidence" value="ECO:0000304"/>
    <property type="project" value="UniProtKB"/>
</dbReference>
<dbReference type="GO" id="GO:0000375">
    <property type="term" value="P:RNA splicing, via transesterification reactions"/>
    <property type="evidence" value="ECO:0000304"/>
    <property type="project" value="UniProtKB"/>
</dbReference>
<dbReference type="GO" id="GO:0000245">
    <property type="term" value="P:spliceosomal complex assembly"/>
    <property type="evidence" value="ECO:0000304"/>
    <property type="project" value="ProtInc"/>
</dbReference>
<dbReference type="GO" id="GO:0000387">
    <property type="term" value="P:spliceosomal snRNP assembly"/>
    <property type="evidence" value="ECO:0000314"/>
    <property type="project" value="UniProtKB"/>
</dbReference>
<dbReference type="FunFam" id="1.20.58.1070:FF:000001">
    <property type="entry name" value="Gem-associated protein 2"/>
    <property type="match status" value="1"/>
</dbReference>
<dbReference type="Gene3D" id="1.20.5.220">
    <property type="match status" value="1"/>
</dbReference>
<dbReference type="Gene3D" id="1.20.58.1070">
    <property type="match status" value="1"/>
</dbReference>
<dbReference type="IDEAL" id="IID00524"/>
<dbReference type="InterPro" id="IPR017364">
    <property type="entry name" value="GEMIN2"/>
</dbReference>
<dbReference type="InterPro" id="IPR035426">
    <property type="entry name" value="Gemin2/Brr1"/>
</dbReference>
<dbReference type="PANTHER" id="PTHR12794:SF0">
    <property type="entry name" value="GEM-ASSOCIATED PROTEIN 2"/>
    <property type="match status" value="1"/>
</dbReference>
<dbReference type="PANTHER" id="PTHR12794">
    <property type="entry name" value="GEMIN2"/>
    <property type="match status" value="1"/>
</dbReference>
<dbReference type="Pfam" id="PF04938">
    <property type="entry name" value="SIP1"/>
    <property type="match status" value="1"/>
</dbReference>
<dbReference type="PIRSF" id="PIRSF038038">
    <property type="entry name" value="SMN_Gemin2"/>
    <property type="match status" value="1"/>
</dbReference>
<name>GEMI2_HUMAN</name>